<comment type="function">
    <text evidence="1">Promotes RNA polymerase assembly. Latches the N- and C-terminal regions of the beta' subunit thereby facilitating its interaction with the beta and alpha subunits.</text>
</comment>
<comment type="catalytic activity">
    <reaction evidence="1">
        <text>RNA(n) + a ribonucleoside 5'-triphosphate = RNA(n+1) + diphosphate</text>
        <dbReference type="Rhea" id="RHEA:21248"/>
        <dbReference type="Rhea" id="RHEA-COMP:14527"/>
        <dbReference type="Rhea" id="RHEA-COMP:17342"/>
        <dbReference type="ChEBI" id="CHEBI:33019"/>
        <dbReference type="ChEBI" id="CHEBI:61557"/>
        <dbReference type="ChEBI" id="CHEBI:140395"/>
        <dbReference type="EC" id="2.7.7.6"/>
    </reaction>
</comment>
<comment type="subunit">
    <text evidence="1">The RNAP catalytic core consists of 2 alpha, 1 beta, 1 beta' and 1 omega subunit. When a sigma factor is associated with the core the holoenzyme is formed, which can initiate transcription.</text>
</comment>
<comment type="similarity">
    <text evidence="1">Belongs to the RNA polymerase subunit omega family.</text>
</comment>
<protein>
    <recommendedName>
        <fullName evidence="1">DNA-directed RNA polymerase subunit omega</fullName>
        <shortName evidence="1">RNAP omega subunit</shortName>
        <ecNumber evidence="1">2.7.7.6</ecNumber>
    </recommendedName>
    <alternativeName>
        <fullName evidence="1">RNA polymerase omega subunit</fullName>
    </alternativeName>
    <alternativeName>
        <fullName evidence="1">Transcriptase subunit omega</fullName>
    </alternativeName>
</protein>
<gene>
    <name evidence="1" type="primary">rpoZ</name>
    <name type="ordered locus">SSU05_0423</name>
</gene>
<name>RPOZ_STRSY</name>
<evidence type="ECO:0000255" key="1">
    <source>
        <dbReference type="HAMAP-Rule" id="MF_00366"/>
    </source>
</evidence>
<accession>A4VTF1</accession>
<dbReference type="EC" id="2.7.7.6" evidence="1"/>
<dbReference type="EMBL" id="CP000407">
    <property type="protein sequence ID" value="ABP89390.1"/>
    <property type="molecule type" value="Genomic_DNA"/>
</dbReference>
<dbReference type="SMR" id="A4VTF1"/>
<dbReference type="STRING" id="391295.SSU05_0423"/>
<dbReference type="KEGG" id="ssu:SSU05_0423"/>
<dbReference type="eggNOG" id="COG1758">
    <property type="taxonomic scope" value="Bacteria"/>
</dbReference>
<dbReference type="HOGENOM" id="CLU_125406_0_0_9"/>
<dbReference type="GO" id="GO:0000428">
    <property type="term" value="C:DNA-directed RNA polymerase complex"/>
    <property type="evidence" value="ECO:0007669"/>
    <property type="project" value="UniProtKB-KW"/>
</dbReference>
<dbReference type="GO" id="GO:0003677">
    <property type="term" value="F:DNA binding"/>
    <property type="evidence" value="ECO:0007669"/>
    <property type="project" value="UniProtKB-UniRule"/>
</dbReference>
<dbReference type="GO" id="GO:0003899">
    <property type="term" value="F:DNA-directed RNA polymerase activity"/>
    <property type="evidence" value="ECO:0007669"/>
    <property type="project" value="UniProtKB-UniRule"/>
</dbReference>
<dbReference type="GO" id="GO:0006351">
    <property type="term" value="P:DNA-templated transcription"/>
    <property type="evidence" value="ECO:0007669"/>
    <property type="project" value="UniProtKB-UniRule"/>
</dbReference>
<dbReference type="Gene3D" id="3.90.940.10">
    <property type="match status" value="1"/>
</dbReference>
<dbReference type="HAMAP" id="MF_00366">
    <property type="entry name" value="RNApol_bact_RpoZ"/>
    <property type="match status" value="1"/>
</dbReference>
<dbReference type="InterPro" id="IPR003716">
    <property type="entry name" value="DNA-dir_RNA_pol_omega"/>
</dbReference>
<dbReference type="InterPro" id="IPR006110">
    <property type="entry name" value="Pol_omega/Rpo6/RPB6"/>
</dbReference>
<dbReference type="InterPro" id="IPR036161">
    <property type="entry name" value="RPB6/omega-like_sf"/>
</dbReference>
<dbReference type="NCBIfam" id="TIGR00690">
    <property type="entry name" value="rpoZ"/>
    <property type="match status" value="1"/>
</dbReference>
<dbReference type="PANTHER" id="PTHR34476">
    <property type="entry name" value="DNA-DIRECTED RNA POLYMERASE SUBUNIT OMEGA"/>
    <property type="match status" value="1"/>
</dbReference>
<dbReference type="PANTHER" id="PTHR34476:SF1">
    <property type="entry name" value="DNA-DIRECTED RNA POLYMERASE SUBUNIT OMEGA"/>
    <property type="match status" value="1"/>
</dbReference>
<dbReference type="Pfam" id="PF01192">
    <property type="entry name" value="RNA_pol_Rpb6"/>
    <property type="match status" value="1"/>
</dbReference>
<dbReference type="SMART" id="SM01409">
    <property type="entry name" value="RNA_pol_Rpb6"/>
    <property type="match status" value="1"/>
</dbReference>
<dbReference type="SUPFAM" id="SSF63562">
    <property type="entry name" value="RPB6/omega subunit-like"/>
    <property type="match status" value="1"/>
</dbReference>
<keyword id="KW-0240">DNA-directed RNA polymerase</keyword>
<keyword id="KW-0548">Nucleotidyltransferase</keyword>
<keyword id="KW-0804">Transcription</keyword>
<keyword id="KW-0808">Transferase</keyword>
<feature type="chain" id="PRO_1000059917" description="DNA-directed RNA polymerase subunit omega">
    <location>
        <begin position="1"/>
        <end position="104"/>
    </location>
</feature>
<organism>
    <name type="scientific">Streptococcus suis (strain 05ZYH33)</name>
    <dbReference type="NCBI Taxonomy" id="391295"/>
    <lineage>
        <taxon>Bacteria</taxon>
        <taxon>Bacillati</taxon>
        <taxon>Bacillota</taxon>
        <taxon>Bacilli</taxon>
        <taxon>Lactobacillales</taxon>
        <taxon>Streptococcaceae</taxon>
        <taxon>Streptococcus</taxon>
    </lineage>
</organism>
<proteinExistence type="inferred from homology"/>
<reference key="1">
    <citation type="journal article" date="2007" name="PLoS ONE">
        <title>A glimpse of streptococcal toxic shock syndrome from comparative genomics of S. suis 2 Chinese isolates.</title>
        <authorList>
            <person name="Chen C."/>
            <person name="Tang J."/>
            <person name="Dong W."/>
            <person name="Wang C."/>
            <person name="Feng Y."/>
            <person name="Wang J."/>
            <person name="Zheng F."/>
            <person name="Pan X."/>
            <person name="Liu D."/>
            <person name="Li M."/>
            <person name="Song Y."/>
            <person name="Zhu X."/>
            <person name="Sun H."/>
            <person name="Feng T."/>
            <person name="Guo Z."/>
            <person name="Ju A."/>
            <person name="Ge J."/>
            <person name="Dong Y."/>
            <person name="Sun W."/>
            <person name="Jiang Y."/>
            <person name="Wang J."/>
            <person name="Yan J."/>
            <person name="Yang H."/>
            <person name="Wang X."/>
            <person name="Gao G.F."/>
            <person name="Yang R."/>
            <person name="Wang J."/>
            <person name="Yu J."/>
        </authorList>
    </citation>
    <scope>NUCLEOTIDE SEQUENCE [LARGE SCALE GENOMIC DNA]</scope>
    <source>
        <strain>05ZYH33</strain>
    </source>
</reference>
<sequence length="104" mass="11792">MMLKPSIDTLLDKVPSKYSLVILEAKRAHELEAGAKPTQEFTSVKSTLRALEEIESGNVVIHPDPEAKREAVRRRAEEAKRLAEEEERKIKAQIAKEKEEGEKI</sequence>